<proteinExistence type="inferred from homology"/>
<accession>Q6GGY5</accession>
<name>PTGA_STAAR</name>
<feature type="chain" id="PRO_0000186550" description="PTS system glucose-specific EIIA component">
    <location>
        <begin position="1"/>
        <end position="166"/>
    </location>
</feature>
<feature type="domain" description="PTS EIIA type-1" evidence="2">
    <location>
        <begin position="34"/>
        <end position="138"/>
    </location>
</feature>
<feature type="active site" description="Tele-phosphohistidine intermediate; for EIIA activity" evidence="1 2">
    <location>
        <position position="86"/>
    </location>
</feature>
<feature type="binding site" evidence="1">
    <location>
        <position position="71"/>
    </location>
    <ligand>
        <name>Zn(2+)</name>
        <dbReference type="ChEBI" id="CHEBI:29105"/>
        <note>ligand shared with glycerol kinase</note>
    </ligand>
</feature>
<feature type="binding site" evidence="1">
    <location>
        <position position="86"/>
    </location>
    <ligand>
        <name>Zn(2+)</name>
        <dbReference type="ChEBI" id="CHEBI:29105"/>
        <note>ligand shared with glycerol kinase</note>
    </ligand>
</feature>
<feature type="site" description="Important for phospho-donor activity" evidence="1">
    <location>
        <position position="71"/>
    </location>
</feature>
<feature type="modified residue" description="Phosphohistidine; by HPr" evidence="1">
    <location>
        <position position="86"/>
    </location>
</feature>
<gene>
    <name type="primary">crr</name>
    <name type="ordered locus">SAR1435</name>
</gene>
<keyword id="KW-0963">Cytoplasm</keyword>
<keyword id="KW-0418">Kinase</keyword>
<keyword id="KW-0479">Metal-binding</keyword>
<keyword id="KW-0597">Phosphoprotein</keyword>
<keyword id="KW-0598">Phosphotransferase system</keyword>
<keyword id="KW-0762">Sugar transport</keyword>
<keyword id="KW-0808">Transferase</keyword>
<keyword id="KW-0813">Transport</keyword>
<keyword id="KW-0862">Zinc</keyword>
<reference key="1">
    <citation type="journal article" date="2004" name="Proc. Natl. Acad. Sci. U.S.A.">
        <title>Complete genomes of two clinical Staphylococcus aureus strains: evidence for the rapid evolution of virulence and drug resistance.</title>
        <authorList>
            <person name="Holden M.T.G."/>
            <person name="Feil E.J."/>
            <person name="Lindsay J.A."/>
            <person name="Peacock S.J."/>
            <person name="Day N.P.J."/>
            <person name="Enright M.C."/>
            <person name="Foster T.J."/>
            <person name="Moore C.E."/>
            <person name="Hurst L."/>
            <person name="Atkin R."/>
            <person name="Barron A."/>
            <person name="Bason N."/>
            <person name="Bentley S.D."/>
            <person name="Chillingworth C."/>
            <person name="Chillingworth T."/>
            <person name="Churcher C."/>
            <person name="Clark L."/>
            <person name="Corton C."/>
            <person name="Cronin A."/>
            <person name="Doggett J."/>
            <person name="Dowd L."/>
            <person name="Feltwell T."/>
            <person name="Hance Z."/>
            <person name="Harris B."/>
            <person name="Hauser H."/>
            <person name="Holroyd S."/>
            <person name="Jagels K."/>
            <person name="James K.D."/>
            <person name="Lennard N."/>
            <person name="Line A."/>
            <person name="Mayes R."/>
            <person name="Moule S."/>
            <person name="Mungall K."/>
            <person name="Ormond D."/>
            <person name="Quail M.A."/>
            <person name="Rabbinowitsch E."/>
            <person name="Rutherford K.M."/>
            <person name="Sanders M."/>
            <person name="Sharp S."/>
            <person name="Simmonds M."/>
            <person name="Stevens K."/>
            <person name="Whitehead S."/>
            <person name="Barrell B.G."/>
            <person name="Spratt B.G."/>
            <person name="Parkhill J."/>
        </authorList>
    </citation>
    <scope>NUCLEOTIDE SEQUENCE [LARGE SCALE GENOMIC DNA]</scope>
    <source>
        <strain>MRSA252</strain>
    </source>
</reference>
<dbReference type="EMBL" id="BX571856">
    <property type="protein sequence ID" value="CAG40432.1"/>
    <property type="molecule type" value="Genomic_DNA"/>
</dbReference>
<dbReference type="RefSeq" id="WP_000473654.1">
    <property type="nucleotide sequence ID" value="NC_002952.2"/>
</dbReference>
<dbReference type="SMR" id="Q6GGY5"/>
<dbReference type="KEGG" id="sar:SAR1435"/>
<dbReference type="HOGENOM" id="CLU_012312_5_3_9"/>
<dbReference type="Proteomes" id="UP000000596">
    <property type="component" value="Chromosome"/>
</dbReference>
<dbReference type="GO" id="GO:0005737">
    <property type="term" value="C:cytoplasm"/>
    <property type="evidence" value="ECO:0007669"/>
    <property type="project" value="UniProtKB-SubCell"/>
</dbReference>
<dbReference type="GO" id="GO:0016301">
    <property type="term" value="F:kinase activity"/>
    <property type="evidence" value="ECO:0007669"/>
    <property type="project" value="UniProtKB-KW"/>
</dbReference>
<dbReference type="GO" id="GO:0046872">
    <property type="term" value="F:metal ion binding"/>
    <property type="evidence" value="ECO:0007669"/>
    <property type="project" value="UniProtKB-KW"/>
</dbReference>
<dbReference type="GO" id="GO:0009401">
    <property type="term" value="P:phosphoenolpyruvate-dependent sugar phosphotransferase system"/>
    <property type="evidence" value="ECO:0007669"/>
    <property type="project" value="UniProtKB-KW"/>
</dbReference>
<dbReference type="FunFam" id="2.70.70.10:FF:000001">
    <property type="entry name" value="PTS system glucose-specific IIA component"/>
    <property type="match status" value="1"/>
</dbReference>
<dbReference type="Gene3D" id="2.70.70.10">
    <property type="entry name" value="Glucose Permease (Domain IIA)"/>
    <property type="match status" value="1"/>
</dbReference>
<dbReference type="InterPro" id="IPR011055">
    <property type="entry name" value="Dup_hybrid_motif"/>
</dbReference>
<dbReference type="InterPro" id="IPR001127">
    <property type="entry name" value="PTS_EIIA_1_perm"/>
</dbReference>
<dbReference type="InterPro" id="IPR050890">
    <property type="entry name" value="PTS_EIIA_component"/>
</dbReference>
<dbReference type="NCBIfam" id="TIGR00830">
    <property type="entry name" value="PTBA"/>
    <property type="match status" value="1"/>
</dbReference>
<dbReference type="PANTHER" id="PTHR45008">
    <property type="entry name" value="PTS SYSTEM GLUCOSE-SPECIFIC EIIA COMPONENT"/>
    <property type="match status" value="1"/>
</dbReference>
<dbReference type="PANTHER" id="PTHR45008:SF1">
    <property type="entry name" value="PTS SYSTEM GLUCOSE-SPECIFIC EIIA COMPONENT"/>
    <property type="match status" value="1"/>
</dbReference>
<dbReference type="Pfam" id="PF00358">
    <property type="entry name" value="PTS_EIIA_1"/>
    <property type="match status" value="1"/>
</dbReference>
<dbReference type="SUPFAM" id="SSF51261">
    <property type="entry name" value="Duplicated hybrid motif"/>
    <property type="match status" value="1"/>
</dbReference>
<dbReference type="PROSITE" id="PS51093">
    <property type="entry name" value="PTS_EIIA_TYPE_1"/>
    <property type="match status" value="1"/>
</dbReference>
<dbReference type="PROSITE" id="PS00371">
    <property type="entry name" value="PTS_EIIA_TYPE_1_HIS"/>
    <property type="match status" value="1"/>
</dbReference>
<sequence>MFKKLFGKGKEVQKDIAIYAPLTGEYVKIEDIPDPVFAQKMMGEGFGINPTEGEVVSPIAGRVDNVFPTKHAIGLKADNGLELLVHIGLDTVQLDGEGFEVLVSSGDEVNVGDPLVRFNLEYINNNAKSVISPIIITNTDQAASINIYDENAVIKGETKVIDVTMN</sequence>
<evidence type="ECO:0000250" key="1">
    <source>
        <dbReference type="UniProtKB" id="P69783"/>
    </source>
</evidence>
<evidence type="ECO:0000255" key="2">
    <source>
        <dbReference type="PROSITE-ProRule" id="PRU00416"/>
    </source>
</evidence>
<evidence type="ECO:0000305" key="3"/>
<comment type="function">
    <text evidence="1">The phosphoenolpyruvate-dependent sugar phosphotransferase system (sugar PTS), a major carbohydrate active transport system, catalyzes the phosphorylation of incoming sugar substrates concomitantly with their translocation across the cell membrane. The enzyme II complex composed of PtsG and Crr is involved in glucose transport.</text>
</comment>
<comment type="cofactor">
    <cofactor evidence="1">
        <name>Zn(2+)</name>
        <dbReference type="ChEBI" id="CHEBI:29105"/>
    </cofactor>
    <text evidence="1">Binds 1 zinc ion per glycerol kinase EIIA-Glc dimer. The zinc ion is important for dimerization.</text>
</comment>
<comment type="subunit">
    <text evidence="1">Heterodimer with glycerol kinase (glpk).</text>
</comment>
<comment type="subcellular location">
    <subcellularLocation>
        <location evidence="3">Cytoplasm</location>
    </subcellularLocation>
</comment>
<comment type="domain">
    <text evidence="2">The EIIA domain is phosphorylated by phospho-HPr on a histidyl residue. Then, it transfers the phosphoryl group to the EIIB domain.</text>
</comment>
<protein>
    <recommendedName>
        <fullName evidence="1">PTS system glucose-specific EIIA component</fullName>
    </recommendedName>
    <alternativeName>
        <fullName evidence="1">EIIA-Glc</fullName>
    </alternativeName>
    <alternativeName>
        <fullName evidence="1">EIII-Glc</fullName>
    </alternativeName>
    <alternativeName>
        <fullName evidence="1">Glucose-specific phosphotransferase enzyme IIA component</fullName>
    </alternativeName>
</protein>
<organism>
    <name type="scientific">Staphylococcus aureus (strain MRSA252)</name>
    <dbReference type="NCBI Taxonomy" id="282458"/>
    <lineage>
        <taxon>Bacteria</taxon>
        <taxon>Bacillati</taxon>
        <taxon>Bacillota</taxon>
        <taxon>Bacilli</taxon>
        <taxon>Bacillales</taxon>
        <taxon>Staphylococcaceae</taxon>
        <taxon>Staphylococcus</taxon>
    </lineage>
</organism>